<name>SAHH2_ARATH</name>
<feature type="chain" id="PRO_0000116921" description="Adenosylhomocysteinase 2">
    <location>
        <begin position="1"/>
        <end position="485"/>
    </location>
</feature>
<feature type="binding site" evidence="1">
    <location>
        <position position="64"/>
    </location>
    <ligand>
        <name>substrate</name>
    </ligand>
</feature>
<feature type="binding site" evidence="1">
    <location>
        <position position="139"/>
    </location>
    <ligand>
        <name>substrate</name>
    </ligand>
</feature>
<feature type="binding site" evidence="1">
    <location>
        <position position="205"/>
    </location>
    <ligand>
        <name>substrate</name>
    </ligand>
</feature>
<feature type="binding site" evidence="1">
    <location>
        <begin position="206"/>
        <end position="208"/>
    </location>
    <ligand>
        <name>NAD(+)</name>
        <dbReference type="ChEBI" id="CHEBI:57540"/>
    </ligand>
</feature>
<feature type="binding site" evidence="1">
    <location>
        <position position="235"/>
    </location>
    <ligand>
        <name>substrate</name>
    </ligand>
</feature>
<feature type="binding site" evidence="1">
    <location>
        <position position="239"/>
    </location>
    <ligand>
        <name>substrate</name>
    </ligand>
</feature>
<feature type="binding site" evidence="1">
    <location>
        <position position="240"/>
    </location>
    <ligand>
        <name>NAD(+)</name>
        <dbReference type="ChEBI" id="CHEBI:57540"/>
    </ligand>
</feature>
<feature type="binding site" evidence="1">
    <location>
        <begin position="269"/>
        <end position="274"/>
    </location>
    <ligand>
        <name>NAD(+)</name>
        <dbReference type="ChEBI" id="CHEBI:57540"/>
    </ligand>
</feature>
<feature type="binding site" evidence="1">
    <location>
        <position position="292"/>
    </location>
    <ligand>
        <name>NAD(+)</name>
        <dbReference type="ChEBI" id="CHEBI:57540"/>
    </ligand>
</feature>
<feature type="binding site" evidence="1">
    <location>
        <position position="327"/>
    </location>
    <ligand>
        <name>NAD(+)</name>
        <dbReference type="ChEBI" id="CHEBI:57540"/>
    </ligand>
</feature>
<feature type="binding site" evidence="1">
    <location>
        <begin position="348"/>
        <end position="350"/>
    </location>
    <ligand>
        <name>NAD(+)</name>
        <dbReference type="ChEBI" id="CHEBI:57540"/>
    </ligand>
</feature>
<feature type="binding site" evidence="1">
    <location>
        <position position="397"/>
    </location>
    <ligand>
        <name>NAD(+)</name>
        <dbReference type="ChEBI" id="CHEBI:57540"/>
    </ligand>
</feature>
<feature type="sequence conflict" description="In Ref. 3; AAL16259." evidence="2" ref="3">
    <original>T</original>
    <variation>A</variation>
    <location>
        <position position="44"/>
    </location>
</feature>
<feature type="sequence conflict" description="In Ref. 3; AAM19782." evidence="2" ref="3">
    <original>E</original>
    <variation>A</variation>
    <location>
        <position position="155"/>
    </location>
</feature>
<feature type="sequence conflict" description="In Ref. 3; AAK92718." evidence="2" ref="3">
    <original>H</original>
    <variation>R</variation>
    <location>
        <position position="442"/>
    </location>
</feature>
<comment type="function">
    <text evidence="1">Adenosylhomocysteine is a competitive inhibitor of S-adenosyl-L-methionine-dependent methyl transferase reactions; therefore adenosylhomocysteinase may play a key role in the control of methylations via regulation of the intracellular concentration of adenosylhomocysteine.</text>
</comment>
<comment type="catalytic activity">
    <reaction>
        <text>S-adenosyl-L-homocysteine + H2O = L-homocysteine + adenosine</text>
        <dbReference type="Rhea" id="RHEA:21708"/>
        <dbReference type="ChEBI" id="CHEBI:15377"/>
        <dbReference type="ChEBI" id="CHEBI:16335"/>
        <dbReference type="ChEBI" id="CHEBI:57856"/>
        <dbReference type="ChEBI" id="CHEBI:58199"/>
        <dbReference type="EC" id="3.13.2.1"/>
    </reaction>
</comment>
<comment type="cofactor">
    <cofactor evidence="1">
        <name>NAD(+)</name>
        <dbReference type="ChEBI" id="CHEBI:57540"/>
    </cofactor>
</comment>
<comment type="pathway">
    <text>Amino-acid biosynthesis; L-homocysteine biosynthesis; L-homocysteine from S-adenosyl-L-homocysteine: step 1/1.</text>
</comment>
<comment type="miscellaneous">
    <text>In contrast to SAHH1, a mutation in the C-terminus of this protein is not sufficient to abolish transcriptional gene silencing.</text>
</comment>
<comment type="similarity">
    <text evidence="2">Belongs to the adenosylhomocysteinase family.</text>
</comment>
<sequence>MALLVEKTSSGREYKVKDMSQADFGRLEIELAEVEMPGLVSCVTEFGPSQPLKGARITGSLHMTIQTAVLIETLTALGAEVRWCSCNIFSTQDHAAAAIARDSAAVFAWKGETLQEYWWCTERALDWGPGGGPDLIVDDGGDATLLIHEGVKAEEIFAKNGTFPDPTSTDNPEFQIVLSIIKDGLQVDPKKYHKMKERLVGVSEETTTGVKRLYQMQETGALLFPAINVNDSVTKSKFDNLYGCRHSLPDGLMRATDVMIAGKVAVICGYGDVGKGCAAAMKTAGARVIVTEIDPICALQALMEGLQVLTLEDVVSEADIFCTTTGNKDIIMVDHMRKMKNNAIVCNIGHFDNEIDMLGLETYPGVKRITIKPQTDRWVFPDTNSGIIVLAEGRLMNLGCATGHPSFVMSCSFTNQVIAQLELWNEKSSGKYEKKVYVLPKHLDEKVAALHLGKLGARLTKLTKDQSDYVSIPVEGPYKPVHYRY</sequence>
<keyword id="KW-0378">Hydrolase</keyword>
<keyword id="KW-0520">NAD</keyword>
<keyword id="KW-0554">One-carbon metabolism</keyword>
<keyword id="KW-1185">Reference proteome</keyword>
<evidence type="ECO:0000250" key="1"/>
<evidence type="ECO:0000305" key="2"/>
<reference key="1">
    <citation type="journal article" date="2000" name="DNA Res.">
        <title>Structural analysis of Arabidopsis thaliana chromosome 3. II. Sequence features of the 4,251,695 bp regions covered by 90 P1, TAC and BAC clones.</title>
        <authorList>
            <person name="Kaneko T."/>
            <person name="Katoh T."/>
            <person name="Sato S."/>
            <person name="Nakamura Y."/>
            <person name="Asamizu E."/>
            <person name="Tabata S."/>
        </authorList>
    </citation>
    <scope>NUCLEOTIDE SEQUENCE [LARGE SCALE GENOMIC DNA]</scope>
</reference>
<reference key="2">
    <citation type="journal article" date="2017" name="Plant J.">
        <title>Araport11: a complete reannotation of the Arabidopsis thaliana reference genome.</title>
        <authorList>
            <person name="Cheng C.Y."/>
            <person name="Krishnakumar V."/>
            <person name="Chan A.P."/>
            <person name="Thibaud-Nissen F."/>
            <person name="Schobel S."/>
            <person name="Town C.D."/>
        </authorList>
    </citation>
    <scope>GENOME REANNOTATION</scope>
    <source>
        <strain>cv. Columbia</strain>
    </source>
</reference>
<reference key="3">
    <citation type="journal article" date="2003" name="Science">
        <title>Empirical analysis of transcriptional activity in the Arabidopsis genome.</title>
        <authorList>
            <person name="Yamada K."/>
            <person name="Lim J."/>
            <person name="Dale J.M."/>
            <person name="Chen H."/>
            <person name="Shinn P."/>
            <person name="Palm C.J."/>
            <person name="Southwick A.M."/>
            <person name="Wu H.C."/>
            <person name="Kim C.J."/>
            <person name="Nguyen M."/>
            <person name="Pham P.K."/>
            <person name="Cheuk R.F."/>
            <person name="Karlin-Newmann G."/>
            <person name="Liu S.X."/>
            <person name="Lam B."/>
            <person name="Sakano H."/>
            <person name="Wu T."/>
            <person name="Yu G."/>
            <person name="Miranda M."/>
            <person name="Quach H.L."/>
            <person name="Tripp M."/>
            <person name="Chang C.H."/>
            <person name="Lee J.M."/>
            <person name="Toriumi M.J."/>
            <person name="Chan M.M."/>
            <person name="Tang C.C."/>
            <person name="Onodera C.S."/>
            <person name="Deng J.M."/>
            <person name="Akiyama K."/>
            <person name="Ansari Y."/>
            <person name="Arakawa T."/>
            <person name="Banh J."/>
            <person name="Banno F."/>
            <person name="Bowser L."/>
            <person name="Brooks S.Y."/>
            <person name="Carninci P."/>
            <person name="Chao Q."/>
            <person name="Choy N."/>
            <person name="Enju A."/>
            <person name="Goldsmith A.D."/>
            <person name="Gurjal M."/>
            <person name="Hansen N.F."/>
            <person name="Hayashizaki Y."/>
            <person name="Johnson-Hopson C."/>
            <person name="Hsuan V.W."/>
            <person name="Iida K."/>
            <person name="Karnes M."/>
            <person name="Khan S."/>
            <person name="Koesema E."/>
            <person name="Ishida J."/>
            <person name="Jiang P.X."/>
            <person name="Jones T."/>
            <person name="Kawai J."/>
            <person name="Kamiya A."/>
            <person name="Meyers C."/>
            <person name="Nakajima M."/>
            <person name="Narusaka M."/>
            <person name="Seki M."/>
            <person name="Sakurai T."/>
            <person name="Satou M."/>
            <person name="Tamse R."/>
            <person name="Vaysberg M."/>
            <person name="Wallender E.K."/>
            <person name="Wong C."/>
            <person name="Yamamura Y."/>
            <person name="Yuan S."/>
            <person name="Shinozaki K."/>
            <person name="Davis R.W."/>
            <person name="Theologis A."/>
            <person name="Ecker J.R."/>
        </authorList>
    </citation>
    <scope>NUCLEOTIDE SEQUENCE [LARGE SCALE MRNA]</scope>
    <source>
        <strain>cv. Columbia</strain>
    </source>
</reference>
<reference key="4">
    <citation type="journal article" date="2005" name="Plant Cell">
        <title>The Arabidopsis HOMOLOGY-DEPENDENT GENE SILENCING1 gene codes for an S-adenosyl-L-homocysteine hydrolase required for DNA methylation-dependent gene silencing.</title>
        <authorList>
            <person name="Rocha P.S."/>
            <person name="Sheikh M."/>
            <person name="Melchiorre R."/>
            <person name="Fagard M."/>
            <person name="Boutet S."/>
            <person name="Loach R."/>
            <person name="Moffatt B."/>
            <person name="Wagner C."/>
            <person name="Vaucheret H."/>
            <person name="Furner I."/>
        </authorList>
    </citation>
    <scope>ABSENCE OF EFFECT ON TRANSCRIPTIONAL GENE SILENCING</scope>
</reference>
<gene>
    <name type="primary">SAHH2</name>
    <name type="ordered locus">At3g23810</name>
    <name type="ORF">MYM9.16</name>
    <name type="ORF">MYM9_15</name>
</gene>
<dbReference type="EC" id="3.13.2.1"/>
<dbReference type="EMBL" id="AP000377">
    <property type="protein sequence ID" value="BAB01858.1"/>
    <property type="molecule type" value="Genomic_DNA"/>
</dbReference>
<dbReference type="EMBL" id="CP002686">
    <property type="protein sequence ID" value="AEE76817.1"/>
    <property type="molecule type" value="Genomic_DNA"/>
</dbReference>
<dbReference type="EMBL" id="AY059888">
    <property type="protein sequence ID" value="AAL24370.1"/>
    <property type="molecule type" value="mRNA"/>
</dbReference>
<dbReference type="EMBL" id="AY093385">
    <property type="protein sequence ID" value="AAM13384.1"/>
    <property type="molecule type" value="mRNA"/>
</dbReference>
<dbReference type="EMBL" id="AY150471">
    <property type="protein sequence ID" value="AAN12996.1"/>
    <property type="molecule type" value="mRNA"/>
</dbReference>
<dbReference type="EMBL" id="AF428329">
    <property type="protein sequence ID" value="AAL16259.1"/>
    <property type="molecule type" value="mRNA"/>
</dbReference>
<dbReference type="EMBL" id="AY094404">
    <property type="protein sequence ID" value="AAM19782.1"/>
    <property type="molecule type" value="mRNA"/>
</dbReference>
<dbReference type="EMBL" id="AY050783">
    <property type="protein sequence ID" value="AAK92718.1"/>
    <property type="molecule type" value="mRNA"/>
</dbReference>
<dbReference type="RefSeq" id="NP_189023.1">
    <property type="nucleotide sequence ID" value="NM_113286.3"/>
</dbReference>
<dbReference type="SMR" id="Q9LK36"/>
<dbReference type="BioGRID" id="7296">
    <property type="interactions" value="5"/>
</dbReference>
<dbReference type="FunCoup" id="Q9LK36">
    <property type="interactions" value="2665"/>
</dbReference>
<dbReference type="IntAct" id="Q9LK36">
    <property type="interactions" value="1"/>
</dbReference>
<dbReference type="STRING" id="3702.Q9LK36"/>
<dbReference type="iPTMnet" id="Q9LK36"/>
<dbReference type="MetOSite" id="Q9LK36"/>
<dbReference type="PaxDb" id="3702-AT3G23810.1"/>
<dbReference type="ProteomicsDB" id="232837"/>
<dbReference type="EnsemblPlants" id="AT3G23810.1">
    <property type="protein sequence ID" value="AT3G23810.1"/>
    <property type="gene ID" value="AT3G23810"/>
</dbReference>
<dbReference type="GeneID" id="821964"/>
<dbReference type="Gramene" id="AT3G23810.1">
    <property type="protein sequence ID" value="AT3G23810.1"/>
    <property type="gene ID" value="AT3G23810"/>
</dbReference>
<dbReference type="KEGG" id="ath:AT3G23810"/>
<dbReference type="Araport" id="AT3G23810"/>
<dbReference type="TAIR" id="AT3G23810">
    <property type="gene designation" value="SAHH2"/>
</dbReference>
<dbReference type="eggNOG" id="KOG1370">
    <property type="taxonomic scope" value="Eukaryota"/>
</dbReference>
<dbReference type="HOGENOM" id="CLU_025194_2_1_1"/>
<dbReference type="InParanoid" id="Q9LK36"/>
<dbReference type="OMA" id="HKMMASA"/>
<dbReference type="OrthoDB" id="1034615at2759"/>
<dbReference type="PhylomeDB" id="Q9LK36"/>
<dbReference type="BioCyc" id="ARA:AT3G23810-MONOMER"/>
<dbReference type="UniPathway" id="UPA00314">
    <property type="reaction ID" value="UER00076"/>
</dbReference>
<dbReference type="CD-CODE" id="4299E36E">
    <property type="entry name" value="Nucleolus"/>
</dbReference>
<dbReference type="PRO" id="PR:Q9LK36"/>
<dbReference type="Proteomes" id="UP000006548">
    <property type="component" value="Chromosome 3"/>
</dbReference>
<dbReference type="ExpressionAtlas" id="Q9LK36">
    <property type="expression patterns" value="baseline and differential"/>
</dbReference>
<dbReference type="GO" id="GO:0005829">
    <property type="term" value="C:cytosol"/>
    <property type="evidence" value="ECO:0007005"/>
    <property type="project" value="TAIR"/>
</dbReference>
<dbReference type="GO" id="GO:0005773">
    <property type="term" value="C:vacuole"/>
    <property type="evidence" value="ECO:0007005"/>
    <property type="project" value="TAIR"/>
</dbReference>
<dbReference type="GO" id="GO:0004013">
    <property type="term" value="F:adenosylhomocysteinase activity"/>
    <property type="evidence" value="ECO:0007669"/>
    <property type="project" value="RHEA"/>
</dbReference>
<dbReference type="GO" id="GO:0003729">
    <property type="term" value="F:mRNA binding"/>
    <property type="evidence" value="ECO:0000314"/>
    <property type="project" value="TAIR"/>
</dbReference>
<dbReference type="GO" id="GO:0006730">
    <property type="term" value="P:one-carbon metabolic process"/>
    <property type="evidence" value="ECO:0007669"/>
    <property type="project" value="UniProtKB-KW"/>
</dbReference>
<dbReference type="CDD" id="cd00401">
    <property type="entry name" value="SAHH"/>
    <property type="match status" value="1"/>
</dbReference>
<dbReference type="FunFam" id="3.40.50.720:FF:000004">
    <property type="entry name" value="Adenosylhomocysteinase"/>
    <property type="match status" value="1"/>
</dbReference>
<dbReference type="Gene3D" id="3.40.50.1480">
    <property type="entry name" value="Adenosylhomocysteinase-like"/>
    <property type="match status" value="1"/>
</dbReference>
<dbReference type="Gene3D" id="3.40.50.720">
    <property type="entry name" value="NAD(P)-binding Rossmann-like Domain"/>
    <property type="match status" value="1"/>
</dbReference>
<dbReference type="HAMAP" id="MF_00563">
    <property type="entry name" value="AdoHcyase"/>
    <property type="match status" value="1"/>
</dbReference>
<dbReference type="InterPro" id="IPR042172">
    <property type="entry name" value="Adenosylhomocyst_ase-like_sf"/>
</dbReference>
<dbReference type="InterPro" id="IPR000043">
    <property type="entry name" value="Adenosylhomocysteinase-like"/>
</dbReference>
<dbReference type="InterPro" id="IPR015878">
    <property type="entry name" value="Ado_hCys_hydrolase_NAD-bd"/>
</dbReference>
<dbReference type="InterPro" id="IPR036291">
    <property type="entry name" value="NAD(P)-bd_dom_sf"/>
</dbReference>
<dbReference type="InterPro" id="IPR020082">
    <property type="entry name" value="S-Ado-L-homoCys_hydrolase_CS"/>
</dbReference>
<dbReference type="NCBIfam" id="TIGR00936">
    <property type="entry name" value="ahcY"/>
    <property type="match status" value="1"/>
</dbReference>
<dbReference type="NCBIfam" id="NF004005">
    <property type="entry name" value="PRK05476.2-3"/>
    <property type="match status" value="1"/>
</dbReference>
<dbReference type="PANTHER" id="PTHR23420">
    <property type="entry name" value="ADENOSYLHOMOCYSTEINASE"/>
    <property type="match status" value="1"/>
</dbReference>
<dbReference type="PANTHER" id="PTHR23420:SF16">
    <property type="entry name" value="ADENOSYLHOMOCYSTEINASE 2"/>
    <property type="match status" value="1"/>
</dbReference>
<dbReference type="Pfam" id="PF05221">
    <property type="entry name" value="AdoHcyase"/>
    <property type="match status" value="1"/>
</dbReference>
<dbReference type="Pfam" id="PF00670">
    <property type="entry name" value="AdoHcyase_NAD"/>
    <property type="match status" value="1"/>
</dbReference>
<dbReference type="PIRSF" id="PIRSF001109">
    <property type="entry name" value="Ad_hcy_hydrolase"/>
    <property type="match status" value="1"/>
</dbReference>
<dbReference type="SMART" id="SM00996">
    <property type="entry name" value="AdoHcyase"/>
    <property type="match status" value="1"/>
</dbReference>
<dbReference type="SMART" id="SM00997">
    <property type="entry name" value="AdoHcyase_NAD"/>
    <property type="match status" value="1"/>
</dbReference>
<dbReference type="SUPFAM" id="SSF52283">
    <property type="entry name" value="Formate/glycerate dehydrogenase catalytic domain-like"/>
    <property type="match status" value="2"/>
</dbReference>
<dbReference type="SUPFAM" id="SSF51735">
    <property type="entry name" value="NAD(P)-binding Rossmann-fold domains"/>
    <property type="match status" value="1"/>
</dbReference>
<dbReference type="PROSITE" id="PS00738">
    <property type="entry name" value="ADOHCYASE_1"/>
    <property type="match status" value="1"/>
</dbReference>
<dbReference type="PROSITE" id="PS00739">
    <property type="entry name" value="ADOHCYASE_2"/>
    <property type="match status" value="1"/>
</dbReference>
<organism>
    <name type="scientific">Arabidopsis thaliana</name>
    <name type="common">Mouse-ear cress</name>
    <dbReference type="NCBI Taxonomy" id="3702"/>
    <lineage>
        <taxon>Eukaryota</taxon>
        <taxon>Viridiplantae</taxon>
        <taxon>Streptophyta</taxon>
        <taxon>Embryophyta</taxon>
        <taxon>Tracheophyta</taxon>
        <taxon>Spermatophyta</taxon>
        <taxon>Magnoliopsida</taxon>
        <taxon>eudicotyledons</taxon>
        <taxon>Gunneridae</taxon>
        <taxon>Pentapetalae</taxon>
        <taxon>rosids</taxon>
        <taxon>malvids</taxon>
        <taxon>Brassicales</taxon>
        <taxon>Brassicaceae</taxon>
        <taxon>Camelineae</taxon>
        <taxon>Arabidopsis</taxon>
    </lineage>
</organism>
<protein>
    <recommendedName>
        <fullName>Adenosylhomocysteinase 2</fullName>
        <shortName>AdoHcyase 2</shortName>
        <ecNumber>3.13.2.1</ecNumber>
    </recommendedName>
    <alternativeName>
        <fullName>S-adenosyl-L-homocysteine hydrolase 1</fullName>
    </alternativeName>
    <alternativeName>
        <fullName>SAH hydrolase 2</fullName>
    </alternativeName>
</protein>
<accession>Q9LK36</accession>
<accession>Q8LPS8</accession>
<accession>Q944K5</accession>
<accession>Q949Z9</accession>
<proteinExistence type="evidence at transcript level"/>